<reference key="1">
    <citation type="journal article" date="2009" name="PLoS Genet.">
        <title>Organised genome dynamics in the Escherichia coli species results in highly diverse adaptive paths.</title>
        <authorList>
            <person name="Touchon M."/>
            <person name="Hoede C."/>
            <person name="Tenaillon O."/>
            <person name="Barbe V."/>
            <person name="Baeriswyl S."/>
            <person name="Bidet P."/>
            <person name="Bingen E."/>
            <person name="Bonacorsi S."/>
            <person name="Bouchier C."/>
            <person name="Bouvet O."/>
            <person name="Calteau A."/>
            <person name="Chiapello H."/>
            <person name="Clermont O."/>
            <person name="Cruveiller S."/>
            <person name="Danchin A."/>
            <person name="Diard M."/>
            <person name="Dossat C."/>
            <person name="Karoui M.E."/>
            <person name="Frapy E."/>
            <person name="Garry L."/>
            <person name="Ghigo J.M."/>
            <person name="Gilles A.M."/>
            <person name="Johnson J."/>
            <person name="Le Bouguenec C."/>
            <person name="Lescat M."/>
            <person name="Mangenot S."/>
            <person name="Martinez-Jehanne V."/>
            <person name="Matic I."/>
            <person name="Nassif X."/>
            <person name="Oztas S."/>
            <person name="Petit M.A."/>
            <person name="Pichon C."/>
            <person name="Rouy Z."/>
            <person name="Ruf C.S."/>
            <person name="Schneider D."/>
            <person name="Tourret J."/>
            <person name="Vacherie B."/>
            <person name="Vallenet D."/>
            <person name="Medigue C."/>
            <person name="Rocha E.P.C."/>
            <person name="Denamur E."/>
        </authorList>
    </citation>
    <scope>NUCLEOTIDE SEQUENCE [LARGE SCALE GENOMIC DNA]</scope>
    <source>
        <strain>ATCC 35469 / DSM 13698 / BCRC 15582 / CCUG 18766 / IAM 14443 / JCM 21226 / LMG 7866 / NBRC 102419 / NCTC 12128 / CDC 0568-73</strain>
    </source>
</reference>
<accession>B7LUF5</accession>
<proteinExistence type="inferred from homology"/>
<protein>
    <recommendedName>
        <fullName evidence="1">1-(5-phosphoribosyl)-5-[(5-phosphoribosylamino)methylideneamino] imidazole-4-carboxamide isomerase</fullName>
        <ecNumber evidence="1">5.3.1.16</ecNumber>
    </recommendedName>
    <alternativeName>
        <fullName evidence="1">Phosphoribosylformimino-5-aminoimidazole carboxamide ribotide isomerase</fullName>
    </alternativeName>
</protein>
<evidence type="ECO:0000255" key="1">
    <source>
        <dbReference type="HAMAP-Rule" id="MF_01014"/>
    </source>
</evidence>
<comment type="catalytic activity">
    <reaction evidence="1">
        <text>1-(5-phospho-beta-D-ribosyl)-5-[(5-phospho-beta-D-ribosylamino)methylideneamino]imidazole-4-carboxamide = 5-[(5-phospho-1-deoxy-D-ribulos-1-ylimino)methylamino]-1-(5-phospho-beta-D-ribosyl)imidazole-4-carboxamide</text>
        <dbReference type="Rhea" id="RHEA:15469"/>
        <dbReference type="ChEBI" id="CHEBI:58435"/>
        <dbReference type="ChEBI" id="CHEBI:58525"/>
        <dbReference type="EC" id="5.3.1.16"/>
    </reaction>
</comment>
<comment type="pathway">
    <text evidence="1">Amino-acid biosynthesis; L-histidine biosynthesis; L-histidine from 5-phospho-alpha-D-ribose 1-diphosphate: step 4/9.</text>
</comment>
<comment type="subcellular location">
    <subcellularLocation>
        <location evidence="1">Cytoplasm</location>
    </subcellularLocation>
</comment>
<comment type="similarity">
    <text evidence="1">Belongs to the HisA/HisF family.</text>
</comment>
<keyword id="KW-0028">Amino-acid biosynthesis</keyword>
<keyword id="KW-0963">Cytoplasm</keyword>
<keyword id="KW-0368">Histidine biosynthesis</keyword>
<keyword id="KW-0413">Isomerase</keyword>
<sequence>MIIPALDLIDGTVVRLHQGDYGKQRDYGNDPLPRLQDYAAQGAEVLHLVDLTGAKDPAKRQIPLIKTLVAGVNVPVQVGGGVRSEEDVAALLEAGVARVVVGSTAVKSPEMVKGWFERFGADALVLALDVRIDEQGNKQVAVSGWQENSGVSLEQLVETYLPVGLKHVLCTDISRDGTLAGSNVSLYEEVCAKYPQVAFQSSGGIGDIDDVAALRGTGVRGVIVGRALLEGKFTVKEAIACWQNA</sequence>
<gene>
    <name evidence="1" type="primary">hisA</name>
    <name type="ordered locus">EFER_2107</name>
</gene>
<dbReference type="EC" id="5.3.1.16" evidence="1"/>
<dbReference type="EMBL" id="CU928158">
    <property type="protein sequence ID" value="CAQ89610.1"/>
    <property type="molecule type" value="Genomic_DNA"/>
</dbReference>
<dbReference type="RefSeq" id="WP_000586444.1">
    <property type="nucleotide sequence ID" value="NC_011740.1"/>
</dbReference>
<dbReference type="SMR" id="B7LUF5"/>
<dbReference type="GeneID" id="75056859"/>
<dbReference type="KEGG" id="efe:EFER_2107"/>
<dbReference type="HOGENOM" id="CLU_048577_1_2_6"/>
<dbReference type="OrthoDB" id="9807749at2"/>
<dbReference type="UniPathway" id="UPA00031">
    <property type="reaction ID" value="UER00009"/>
</dbReference>
<dbReference type="Proteomes" id="UP000000745">
    <property type="component" value="Chromosome"/>
</dbReference>
<dbReference type="GO" id="GO:0005737">
    <property type="term" value="C:cytoplasm"/>
    <property type="evidence" value="ECO:0007669"/>
    <property type="project" value="UniProtKB-SubCell"/>
</dbReference>
<dbReference type="GO" id="GO:0003949">
    <property type="term" value="F:1-(5-phosphoribosyl)-5-[(5-phosphoribosylamino)methylideneamino]imidazole-4-carboxamide isomerase activity"/>
    <property type="evidence" value="ECO:0007669"/>
    <property type="project" value="UniProtKB-UniRule"/>
</dbReference>
<dbReference type="GO" id="GO:0000105">
    <property type="term" value="P:L-histidine biosynthetic process"/>
    <property type="evidence" value="ECO:0007669"/>
    <property type="project" value="UniProtKB-UniRule"/>
</dbReference>
<dbReference type="GO" id="GO:0000162">
    <property type="term" value="P:L-tryptophan biosynthetic process"/>
    <property type="evidence" value="ECO:0007669"/>
    <property type="project" value="TreeGrafter"/>
</dbReference>
<dbReference type="CDD" id="cd04732">
    <property type="entry name" value="HisA"/>
    <property type="match status" value="1"/>
</dbReference>
<dbReference type="FunFam" id="3.20.20.70:FF:000009">
    <property type="entry name" value="1-(5-phosphoribosyl)-5-[(5-phosphoribosylamino)methylideneamino] imidazole-4-carboxamide isomerase"/>
    <property type="match status" value="1"/>
</dbReference>
<dbReference type="Gene3D" id="3.20.20.70">
    <property type="entry name" value="Aldolase class I"/>
    <property type="match status" value="1"/>
</dbReference>
<dbReference type="HAMAP" id="MF_01014">
    <property type="entry name" value="HisA"/>
    <property type="match status" value="1"/>
</dbReference>
<dbReference type="InterPro" id="IPR013785">
    <property type="entry name" value="Aldolase_TIM"/>
</dbReference>
<dbReference type="InterPro" id="IPR006062">
    <property type="entry name" value="His_biosynth"/>
</dbReference>
<dbReference type="InterPro" id="IPR006063">
    <property type="entry name" value="HisA_bact_arch"/>
</dbReference>
<dbReference type="InterPro" id="IPR044524">
    <property type="entry name" value="Isoase_HisA-like"/>
</dbReference>
<dbReference type="InterPro" id="IPR023016">
    <property type="entry name" value="Isoase_HisA-like_bact"/>
</dbReference>
<dbReference type="InterPro" id="IPR011060">
    <property type="entry name" value="RibuloseP-bd_barrel"/>
</dbReference>
<dbReference type="NCBIfam" id="TIGR00007">
    <property type="entry name" value="1-(5-phosphoribosyl)-5-[(5-phosphoribosylamino)methylideneamino]imidazole-4-carboxamide isomerase"/>
    <property type="match status" value="1"/>
</dbReference>
<dbReference type="PANTHER" id="PTHR43090">
    <property type="entry name" value="1-(5-PHOSPHORIBOSYL)-5-[(5-PHOSPHORIBOSYLAMINO)METHYLIDENEAMINO] IMIDAZOLE-4-CARBOXAMIDE ISOMERASE"/>
    <property type="match status" value="1"/>
</dbReference>
<dbReference type="PANTHER" id="PTHR43090:SF2">
    <property type="entry name" value="1-(5-PHOSPHORIBOSYL)-5-[(5-PHOSPHORIBOSYLAMINO)METHYLIDENEAMINO] IMIDAZOLE-4-CARBOXAMIDE ISOMERASE"/>
    <property type="match status" value="1"/>
</dbReference>
<dbReference type="Pfam" id="PF00977">
    <property type="entry name" value="His_biosynth"/>
    <property type="match status" value="1"/>
</dbReference>
<dbReference type="SUPFAM" id="SSF51366">
    <property type="entry name" value="Ribulose-phoshate binding barrel"/>
    <property type="match status" value="1"/>
</dbReference>
<feature type="chain" id="PRO_1000135118" description="1-(5-phosphoribosyl)-5-[(5-phosphoribosylamino)methylideneamino] imidazole-4-carboxamide isomerase">
    <location>
        <begin position="1"/>
        <end position="245"/>
    </location>
</feature>
<feature type="active site" description="Proton acceptor" evidence="1">
    <location>
        <position position="7"/>
    </location>
</feature>
<feature type="active site" description="Proton donor" evidence="1">
    <location>
        <position position="129"/>
    </location>
</feature>
<name>HIS4_ESCF3</name>
<organism>
    <name type="scientific">Escherichia fergusonii (strain ATCC 35469 / DSM 13698 / CCUG 18766 / IAM 14443 / JCM 21226 / LMG 7866 / NBRC 102419 / NCTC 12128 / CDC 0568-73)</name>
    <dbReference type="NCBI Taxonomy" id="585054"/>
    <lineage>
        <taxon>Bacteria</taxon>
        <taxon>Pseudomonadati</taxon>
        <taxon>Pseudomonadota</taxon>
        <taxon>Gammaproteobacteria</taxon>
        <taxon>Enterobacterales</taxon>
        <taxon>Enterobacteriaceae</taxon>
        <taxon>Escherichia</taxon>
    </lineage>
</organism>